<evidence type="ECO:0000250" key="1">
    <source>
        <dbReference type="UniProtKB" id="H2K887"/>
    </source>
</evidence>
<evidence type="ECO:0000250" key="2">
    <source>
        <dbReference type="UniProtKB" id="Q9S5E2"/>
    </source>
</evidence>
<evidence type="ECO:0000269" key="3">
    <source>
    </source>
</evidence>
<evidence type="ECO:0000303" key="4">
    <source>
    </source>
</evidence>
<evidence type="ECO:0000305" key="5"/>
<name>ACBC_ACTS5</name>
<keyword id="KW-0170">Cobalt</keyword>
<keyword id="KW-0456">Lyase</keyword>
<keyword id="KW-0479">Metal-binding</keyword>
<keyword id="KW-0520">NAD</keyword>
<keyword id="KW-0547">Nucleotide-binding</keyword>
<keyword id="KW-1185">Reference proteome</keyword>
<protein>
    <recommendedName>
        <fullName evidence="5">2-epi-5-epi-valiolone synthase</fullName>
        <shortName evidence="5">EEVS</shortName>
        <ecNumber evidence="3">4.2.3.152</ecNumber>
    </recommendedName>
    <alternativeName>
        <fullName evidence="4">C7-cyclitol synthase</fullName>
    </alternativeName>
    <alternativeName>
        <fullName evidence="4">Sedoheptulose 7-phosphate cyclase</fullName>
    </alternativeName>
</protein>
<sequence length="398" mass="43747">MSGVETVGVHADAHRDSWQVRAQKQITYEVRFRDDVFGLDSTDLLEAGADGAGSRRRFVVVDSAVDALYGSRIREYFTHHGIDHSILVMRVGETVKDFDTAGRIVAAMDAFGLARRREPMIVVGGGVLMDVAGLVASLYRRGTPFLRVPTTLVGLIDAGVGAKTGVNFNGHKNRLGTYAPADLTLLDRRFLATLDRRHLSNGLAEMLKIALIKDAELFQLLERHGRVLIEERFQGRTGTGDRAAVRALRAATHGMLEELGPNLWESRLERSVDYGHTFSPTIEMRALPALLHGEAVCVDMALTTVLAYRRGLLDVAQRDRIFAVMTALGLPTWHPLLTPEVLEAALQDTVRHRDGWQRLPLPVGIGGVTFVNDVTAAELQAAALMQHRLAEDALLLRA</sequence>
<proteinExistence type="evidence at protein level"/>
<dbReference type="EC" id="4.2.3.152" evidence="3"/>
<dbReference type="EMBL" id="Y18523">
    <property type="protein sequence ID" value="CAA77208.2"/>
    <property type="molecule type" value="Genomic_DNA"/>
</dbReference>
<dbReference type="EMBL" id="CP003170">
    <property type="protein sequence ID" value="AEV84575.1"/>
    <property type="molecule type" value="Genomic_DNA"/>
</dbReference>
<dbReference type="RefSeq" id="WP_014690647.1">
    <property type="nucleotide sequence ID" value="NC_017803.1"/>
</dbReference>
<dbReference type="SMR" id="Q9ZAE9"/>
<dbReference type="STRING" id="134676.ACPL_3680"/>
<dbReference type="KEGG" id="ase:ACPL_3680"/>
<dbReference type="PATRIC" id="fig|134676.3.peg.3596"/>
<dbReference type="eggNOG" id="COG0337">
    <property type="taxonomic scope" value="Bacteria"/>
</dbReference>
<dbReference type="HOGENOM" id="CLU_001201_0_4_11"/>
<dbReference type="OrthoDB" id="9806583at2"/>
<dbReference type="BRENDA" id="4.2.3.152">
    <property type="organism ID" value="144"/>
</dbReference>
<dbReference type="Proteomes" id="UP000005440">
    <property type="component" value="Chromosome"/>
</dbReference>
<dbReference type="GO" id="GO:0003856">
    <property type="term" value="F:3-dehydroquinate synthase activity"/>
    <property type="evidence" value="ECO:0007669"/>
    <property type="project" value="TreeGrafter"/>
</dbReference>
<dbReference type="GO" id="GO:0046872">
    <property type="term" value="F:metal ion binding"/>
    <property type="evidence" value="ECO:0007669"/>
    <property type="project" value="UniProtKB-KW"/>
</dbReference>
<dbReference type="GO" id="GO:0000166">
    <property type="term" value="F:nucleotide binding"/>
    <property type="evidence" value="ECO:0007669"/>
    <property type="project" value="UniProtKB-KW"/>
</dbReference>
<dbReference type="GO" id="GO:0017000">
    <property type="term" value="P:antibiotic biosynthetic process"/>
    <property type="evidence" value="ECO:0007669"/>
    <property type="project" value="InterPro"/>
</dbReference>
<dbReference type="CDD" id="cd08199">
    <property type="entry name" value="EEVS"/>
    <property type="match status" value="1"/>
</dbReference>
<dbReference type="Gene3D" id="3.40.50.1970">
    <property type="match status" value="1"/>
</dbReference>
<dbReference type="Gene3D" id="1.20.1090.10">
    <property type="entry name" value="Dehydroquinate synthase-like - alpha domain"/>
    <property type="match status" value="1"/>
</dbReference>
<dbReference type="InterPro" id="IPR050071">
    <property type="entry name" value="Dehydroquinate_synthase"/>
</dbReference>
<dbReference type="InterPro" id="IPR030960">
    <property type="entry name" value="DHQS/DOIS_N"/>
</dbReference>
<dbReference type="InterPro" id="IPR056179">
    <property type="entry name" value="DHQS_C"/>
</dbReference>
<dbReference type="InterPro" id="IPR035872">
    <property type="entry name" value="EEVS-like"/>
</dbReference>
<dbReference type="PANTHER" id="PTHR43622:SF3">
    <property type="entry name" value="2-EPI-5-EPI-VALIOLONE SYNTHASE"/>
    <property type="match status" value="1"/>
</dbReference>
<dbReference type="PANTHER" id="PTHR43622">
    <property type="entry name" value="3-DEHYDROQUINATE SYNTHASE"/>
    <property type="match status" value="1"/>
</dbReference>
<dbReference type="Pfam" id="PF01761">
    <property type="entry name" value="DHQ_synthase"/>
    <property type="match status" value="1"/>
</dbReference>
<dbReference type="Pfam" id="PF24621">
    <property type="entry name" value="DHQS_C"/>
    <property type="match status" value="1"/>
</dbReference>
<dbReference type="SUPFAM" id="SSF56796">
    <property type="entry name" value="Dehydroquinate synthase-like"/>
    <property type="match status" value="1"/>
</dbReference>
<feature type="chain" id="PRO_0000140826" description="2-epi-5-epi-valiolone synthase">
    <location>
        <begin position="1"/>
        <end position="398"/>
    </location>
</feature>
<feature type="active site" evidence="2">
    <location>
        <position position="163"/>
    </location>
</feature>
<feature type="binding site" evidence="1">
    <location>
        <position position="62"/>
    </location>
    <ligand>
        <name>NAD(+)</name>
        <dbReference type="ChEBI" id="CHEBI:57540"/>
    </ligand>
</feature>
<feature type="binding site" evidence="1">
    <location>
        <begin position="93"/>
        <end position="96"/>
    </location>
    <ligand>
        <name>NAD(+)</name>
        <dbReference type="ChEBI" id="CHEBI:57540"/>
    </ligand>
</feature>
<feature type="binding site" evidence="1">
    <location>
        <begin position="126"/>
        <end position="130"/>
    </location>
    <ligand>
        <name>NAD(+)</name>
        <dbReference type="ChEBI" id="CHEBI:57540"/>
    </ligand>
</feature>
<feature type="binding site" evidence="1">
    <location>
        <begin position="150"/>
        <end position="151"/>
    </location>
    <ligand>
        <name>NAD(+)</name>
        <dbReference type="ChEBI" id="CHEBI:57540"/>
    </ligand>
</feature>
<feature type="binding site" evidence="1">
    <location>
        <position position="163"/>
    </location>
    <ligand>
        <name>NAD(+)</name>
        <dbReference type="ChEBI" id="CHEBI:57540"/>
    </ligand>
</feature>
<feature type="binding site" evidence="1">
    <location>
        <position position="172"/>
    </location>
    <ligand>
        <name>NAD(+)</name>
        <dbReference type="ChEBI" id="CHEBI:57540"/>
    </ligand>
</feature>
<feature type="binding site" evidence="1">
    <location>
        <begin position="190"/>
        <end position="193"/>
    </location>
    <ligand>
        <name>NAD(+)</name>
        <dbReference type="ChEBI" id="CHEBI:57540"/>
    </ligand>
</feature>
<feature type="binding site" evidence="1">
    <location>
        <position position="205"/>
    </location>
    <ligand>
        <name>a divalent metal cation</name>
        <dbReference type="ChEBI" id="CHEBI:60240"/>
    </ligand>
</feature>
<feature type="binding site" evidence="1">
    <location>
        <position position="276"/>
    </location>
    <ligand>
        <name>a divalent metal cation</name>
        <dbReference type="ChEBI" id="CHEBI:60240"/>
    </ligand>
</feature>
<feature type="binding site" evidence="1">
    <location>
        <position position="292"/>
    </location>
    <ligand>
        <name>a divalent metal cation</name>
        <dbReference type="ChEBI" id="CHEBI:60240"/>
    </ligand>
</feature>
<feature type="sequence conflict" description="In Ref. 1; CAA77208." evidence="5" ref="1">
    <original>AELQAAALMQHRLAEDALLLRA</original>
    <variation>GRAAGRPR</variation>
    <location>
        <begin position="377"/>
        <end position="398"/>
    </location>
</feature>
<comment type="function">
    <text evidence="3">Catalyzes the cyclization of D-sedoheptulose 7-phosphate to 2-epi-5-epi-valiolone. Does not use ido-heptulose 7-phosphate and 3-deoxy-arabino-heptulosonate 7-phosphate. Involved in the biosynthesis of the acarviose moiety of the alpha-glucosidase inhibitor acarbose.</text>
</comment>
<comment type="catalytic activity">
    <reaction evidence="3">
        <text>D-sedoheptulose 7-phosphate = 2-epi-5-epi-valiolone + phosphate</text>
        <dbReference type="Rhea" id="RHEA:44184"/>
        <dbReference type="ChEBI" id="CHEBI:43474"/>
        <dbReference type="ChEBI" id="CHEBI:57483"/>
        <dbReference type="ChEBI" id="CHEBI:84187"/>
        <dbReference type="EC" id="4.2.3.152"/>
    </reaction>
</comment>
<comment type="cofactor">
    <cofactor evidence="3">
        <name>NAD(+)</name>
        <dbReference type="ChEBI" id="CHEBI:57540"/>
    </cofactor>
</comment>
<comment type="cofactor">
    <cofactor evidence="3">
        <name>Co(2+)</name>
        <dbReference type="ChEBI" id="CHEBI:48828"/>
    </cofactor>
    <text evidence="3">Divalent metal cation such as Co(2+).</text>
</comment>
<comment type="similarity">
    <text evidence="5">Belongs to the sugar phosphate cyclases superfamily. EEVS family.</text>
</comment>
<accession>Q9ZAE9</accession>
<accession>G8SLW1</accession>
<gene>
    <name evidence="4" type="primary">acbC</name>
    <name type="ordered locus">ACPL_3680</name>
</gene>
<reference key="1">
    <citation type="journal article" date="1999" name="J. Biol. Chem.">
        <title>The AcbC protein from Actinoplanes species is a C7-cyclitol synthase related to 3-dehydroquinate synthases and is involved in the biosynthesis of the alpha-glucosidase inhibitor acarbose.</title>
        <authorList>
            <person name="Stratmann A."/>
            <person name="Mahmud T."/>
            <person name="Lee S."/>
            <person name="Distler J."/>
            <person name="Floss H.G."/>
            <person name="Piepersberg W."/>
        </authorList>
    </citation>
    <scope>NUCLEOTIDE SEQUENCE [GENOMIC DNA]</scope>
    <scope>FUNCTION</scope>
    <scope>CATALYTIC ACTIVITY</scope>
    <scope>COFACTOR</scope>
    <source>
        <strain>ATCC 31044 / CBS 674.73 / SE50/110</strain>
    </source>
</reference>
<reference key="2">
    <citation type="submission" date="2006-01" db="EMBL/GenBank/DDBJ databases">
        <authorList>
            <person name="Wehmeier U.F."/>
        </authorList>
    </citation>
    <scope>SEQUENCE REVISION</scope>
</reference>
<reference key="3">
    <citation type="submission" date="2011-12" db="EMBL/GenBank/DDBJ databases">
        <title>The complete genome sequence of the acarbose producer Actinoplanes sp. SE50/110.</title>
        <authorList>
            <person name="Schwientek P."/>
            <person name="Szczepanowski R."/>
            <person name="Kalinowski J."/>
            <person name="Klein A."/>
            <person name="Selber K."/>
            <person name="Wehmeier U.F."/>
            <person name="Stoye J."/>
            <person name="Puehler A."/>
        </authorList>
    </citation>
    <scope>NUCLEOTIDE SEQUENCE [LARGE SCALE GENOMIC DNA]</scope>
    <source>
        <strain>ATCC 31044 / CBS 674.73 / SE50/110</strain>
    </source>
</reference>
<organism>
    <name type="scientific">Actinoplanes sp. (strain ATCC 31044 / CBS 674.73 / SE50/110)</name>
    <dbReference type="NCBI Taxonomy" id="134676"/>
    <lineage>
        <taxon>Bacteria</taxon>
        <taxon>Bacillati</taxon>
        <taxon>Actinomycetota</taxon>
        <taxon>Actinomycetes</taxon>
        <taxon>Micromonosporales</taxon>
        <taxon>Micromonosporaceae</taxon>
        <taxon>Actinoplanes</taxon>
    </lineage>
</organism>